<proteinExistence type="inferred from homology"/>
<sequence>MLEIEKPKIECVARSDDATYGKFVVEPLERGYGVTLGNSLRRILLTSLFGAAVTSVKIEGVLHEFSTIPGVVEDTTDIILNLKQLAIKMHTEESRTIRVEFEGEGVVTAADILTDADVEILNPDQVIATVDKGRLFMEITVEKSRGYITATKHRKSEHAIGVIPIDANFSPVRKVNYRVEDTRVGQITNYDRLILEVWTNGSLTPEEAISWSAKIMNDYLKLFVALTENTENVEIMVETEERPQDKILEMTIEELDLSVRSYNCLKRAGINTVKDLTNKTEEDMIKVRNLGRKSLEEVDAKLAALGLSLRKSED</sequence>
<organism>
    <name type="scientific">Heliobacterium modesticaldum (strain ATCC 51547 / Ice1)</name>
    <dbReference type="NCBI Taxonomy" id="498761"/>
    <lineage>
        <taxon>Bacteria</taxon>
        <taxon>Bacillati</taxon>
        <taxon>Bacillota</taxon>
        <taxon>Clostridia</taxon>
        <taxon>Eubacteriales</taxon>
        <taxon>Heliobacteriaceae</taxon>
        <taxon>Heliomicrobium</taxon>
    </lineage>
</organism>
<gene>
    <name evidence="1" type="primary">rpoA</name>
    <name type="ordered locus">Helmi_13590</name>
    <name type="ORF">HM1_1407</name>
</gene>
<dbReference type="EC" id="2.7.7.6" evidence="1"/>
<dbReference type="EMBL" id="CP000930">
    <property type="protein sequence ID" value="ABZ83984.1"/>
    <property type="molecule type" value="Genomic_DNA"/>
</dbReference>
<dbReference type="RefSeq" id="WP_012282500.1">
    <property type="nucleotide sequence ID" value="NC_010337.2"/>
</dbReference>
<dbReference type="SMR" id="B0TC85"/>
<dbReference type="STRING" id="498761.HM1_1407"/>
<dbReference type="KEGG" id="hmo:HM1_1407"/>
<dbReference type="eggNOG" id="COG0202">
    <property type="taxonomic scope" value="Bacteria"/>
</dbReference>
<dbReference type="HOGENOM" id="CLU_053084_0_1_9"/>
<dbReference type="OrthoDB" id="9805706at2"/>
<dbReference type="Proteomes" id="UP000008550">
    <property type="component" value="Chromosome"/>
</dbReference>
<dbReference type="GO" id="GO:0005737">
    <property type="term" value="C:cytoplasm"/>
    <property type="evidence" value="ECO:0007669"/>
    <property type="project" value="UniProtKB-ARBA"/>
</dbReference>
<dbReference type="GO" id="GO:0000428">
    <property type="term" value="C:DNA-directed RNA polymerase complex"/>
    <property type="evidence" value="ECO:0007669"/>
    <property type="project" value="UniProtKB-KW"/>
</dbReference>
<dbReference type="GO" id="GO:0003677">
    <property type="term" value="F:DNA binding"/>
    <property type="evidence" value="ECO:0007669"/>
    <property type="project" value="UniProtKB-UniRule"/>
</dbReference>
<dbReference type="GO" id="GO:0003899">
    <property type="term" value="F:DNA-directed RNA polymerase activity"/>
    <property type="evidence" value="ECO:0007669"/>
    <property type="project" value="UniProtKB-UniRule"/>
</dbReference>
<dbReference type="GO" id="GO:0046983">
    <property type="term" value="F:protein dimerization activity"/>
    <property type="evidence" value="ECO:0007669"/>
    <property type="project" value="InterPro"/>
</dbReference>
<dbReference type="GO" id="GO:0006351">
    <property type="term" value="P:DNA-templated transcription"/>
    <property type="evidence" value="ECO:0007669"/>
    <property type="project" value="UniProtKB-UniRule"/>
</dbReference>
<dbReference type="CDD" id="cd06928">
    <property type="entry name" value="RNAP_alpha_NTD"/>
    <property type="match status" value="1"/>
</dbReference>
<dbReference type="FunFam" id="1.10.150.20:FF:000001">
    <property type="entry name" value="DNA-directed RNA polymerase subunit alpha"/>
    <property type="match status" value="1"/>
</dbReference>
<dbReference type="FunFam" id="2.170.120.12:FF:000001">
    <property type="entry name" value="DNA-directed RNA polymerase subunit alpha"/>
    <property type="match status" value="1"/>
</dbReference>
<dbReference type="Gene3D" id="1.10.150.20">
    <property type="entry name" value="5' to 3' exonuclease, C-terminal subdomain"/>
    <property type="match status" value="1"/>
</dbReference>
<dbReference type="Gene3D" id="2.170.120.12">
    <property type="entry name" value="DNA-directed RNA polymerase, insert domain"/>
    <property type="match status" value="1"/>
</dbReference>
<dbReference type="Gene3D" id="3.30.1360.10">
    <property type="entry name" value="RNA polymerase, RBP11-like subunit"/>
    <property type="match status" value="1"/>
</dbReference>
<dbReference type="HAMAP" id="MF_00059">
    <property type="entry name" value="RNApol_bact_RpoA"/>
    <property type="match status" value="1"/>
</dbReference>
<dbReference type="InterPro" id="IPR011262">
    <property type="entry name" value="DNA-dir_RNA_pol_insert"/>
</dbReference>
<dbReference type="InterPro" id="IPR011263">
    <property type="entry name" value="DNA-dir_RNA_pol_RpoA/D/Rpb3"/>
</dbReference>
<dbReference type="InterPro" id="IPR011773">
    <property type="entry name" value="DNA-dir_RpoA"/>
</dbReference>
<dbReference type="InterPro" id="IPR036603">
    <property type="entry name" value="RBP11-like"/>
</dbReference>
<dbReference type="InterPro" id="IPR011260">
    <property type="entry name" value="RNAP_asu_C"/>
</dbReference>
<dbReference type="InterPro" id="IPR036643">
    <property type="entry name" value="RNApol_insert_sf"/>
</dbReference>
<dbReference type="NCBIfam" id="NF003513">
    <property type="entry name" value="PRK05182.1-2"/>
    <property type="match status" value="1"/>
</dbReference>
<dbReference type="NCBIfam" id="NF003515">
    <property type="entry name" value="PRK05182.2-1"/>
    <property type="match status" value="1"/>
</dbReference>
<dbReference type="NCBIfam" id="NF003516">
    <property type="entry name" value="PRK05182.2-2"/>
    <property type="match status" value="1"/>
</dbReference>
<dbReference type="NCBIfam" id="NF003519">
    <property type="entry name" value="PRK05182.2-5"/>
    <property type="match status" value="1"/>
</dbReference>
<dbReference type="NCBIfam" id="TIGR02027">
    <property type="entry name" value="rpoA"/>
    <property type="match status" value="1"/>
</dbReference>
<dbReference type="Pfam" id="PF01000">
    <property type="entry name" value="RNA_pol_A_bac"/>
    <property type="match status" value="1"/>
</dbReference>
<dbReference type="Pfam" id="PF03118">
    <property type="entry name" value="RNA_pol_A_CTD"/>
    <property type="match status" value="1"/>
</dbReference>
<dbReference type="Pfam" id="PF01193">
    <property type="entry name" value="RNA_pol_L"/>
    <property type="match status" value="1"/>
</dbReference>
<dbReference type="SMART" id="SM00662">
    <property type="entry name" value="RPOLD"/>
    <property type="match status" value="1"/>
</dbReference>
<dbReference type="SUPFAM" id="SSF47789">
    <property type="entry name" value="C-terminal domain of RNA polymerase alpha subunit"/>
    <property type="match status" value="1"/>
</dbReference>
<dbReference type="SUPFAM" id="SSF56553">
    <property type="entry name" value="Insert subdomain of RNA polymerase alpha subunit"/>
    <property type="match status" value="1"/>
</dbReference>
<dbReference type="SUPFAM" id="SSF55257">
    <property type="entry name" value="RBP11-like subunits of RNA polymerase"/>
    <property type="match status" value="1"/>
</dbReference>
<reference key="1">
    <citation type="journal article" date="2008" name="J. Bacteriol.">
        <title>The genome of Heliobacterium modesticaldum, a phototrophic representative of the Firmicutes containing the simplest photosynthetic apparatus.</title>
        <authorList>
            <person name="Sattley W.M."/>
            <person name="Madigan M.T."/>
            <person name="Swingley W.D."/>
            <person name="Cheung P.C."/>
            <person name="Clocksin K.M."/>
            <person name="Conrad A.L."/>
            <person name="Dejesa L.C."/>
            <person name="Honchak B.M."/>
            <person name="Jung D.O."/>
            <person name="Karbach L.E."/>
            <person name="Kurdoglu A."/>
            <person name="Lahiri S."/>
            <person name="Mastrian S.D."/>
            <person name="Page L.E."/>
            <person name="Taylor H.L."/>
            <person name="Wang Z.T."/>
            <person name="Raymond J."/>
            <person name="Chen M."/>
            <person name="Blankenship R.E."/>
            <person name="Touchman J.W."/>
        </authorList>
    </citation>
    <scope>NUCLEOTIDE SEQUENCE [LARGE SCALE GENOMIC DNA]</scope>
    <source>
        <strain>ATCC 51547 / Ice1</strain>
    </source>
</reference>
<feature type="chain" id="PRO_1000091948" description="DNA-directed RNA polymerase subunit alpha">
    <location>
        <begin position="1"/>
        <end position="314"/>
    </location>
</feature>
<feature type="region of interest" description="Alpha N-terminal domain (alpha-NTD)" evidence="1">
    <location>
        <begin position="1"/>
        <end position="227"/>
    </location>
</feature>
<feature type="region of interest" description="Alpha C-terminal domain (alpha-CTD)" evidence="1">
    <location>
        <begin position="244"/>
        <end position="314"/>
    </location>
</feature>
<comment type="function">
    <text evidence="1">DNA-dependent RNA polymerase catalyzes the transcription of DNA into RNA using the four ribonucleoside triphosphates as substrates.</text>
</comment>
<comment type="catalytic activity">
    <reaction evidence="1">
        <text>RNA(n) + a ribonucleoside 5'-triphosphate = RNA(n+1) + diphosphate</text>
        <dbReference type="Rhea" id="RHEA:21248"/>
        <dbReference type="Rhea" id="RHEA-COMP:14527"/>
        <dbReference type="Rhea" id="RHEA-COMP:17342"/>
        <dbReference type="ChEBI" id="CHEBI:33019"/>
        <dbReference type="ChEBI" id="CHEBI:61557"/>
        <dbReference type="ChEBI" id="CHEBI:140395"/>
        <dbReference type="EC" id="2.7.7.6"/>
    </reaction>
</comment>
<comment type="subunit">
    <text evidence="1">Homodimer. The RNAP catalytic core consists of 2 alpha, 1 beta, 1 beta' and 1 omega subunit. When a sigma factor is associated with the core the holoenzyme is formed, which can initiate transcription.</text>
</comment>
<comment type="domain">
    <text evidence="1">The N-terminal domain is essential for RNAP assembly and basal transcription, whereas the C-terminal domain is involved in interaction with transcriptional regulators and with upstream promoter elements.</text>
</comment>
<comment type="similarity">
    <text evidence="1">Belongs to the RNA polymerase alpha chain family.</text>
</comment>
<protein>
    <recommendedName>
        <fullName evidence="1">DNA-directed RNA polymerase subunit alpha</fullName>
        <shortName evidence="1">RNAP subunit alpha</shortName>
        <ecNumber evidence="1">2.7.7.6</ecNumber>
    </recommendedName>
    <alternativeName>
        <fullName evidence="1">RNA polymerase subunit alpha</fullName>
    </alternativeName>
    <alternativeName>
        <fullName evidence="1">Transcriptase subunit alpha</fullName>
    </alternativeName>
</protein>
<accession>B0TC85</accession>
<evidence type="ECO:0000255" key="1">
    <source>
        <dbReference type="HAMAP-Rule" id="MF_00059"/>
    </source>
</evidence>
<keyword id="KW-0240">DNA-directed RNA polymerase</keyword>
<keyword id="KW-0548">Nucleotidyltransferase</keyword>
<keyword id="KW-1185">Reference proteome</keyword>
<keyword id="KW-0804">Transcription</keyword>
<keyword id="KW-0808">Transferase</keyword>
<name>RPOA_HELMI</name>